<reference key="1">
    <citation type="submission" date="2007-09" db="EMBL/GenBank/DDBJ databases">
        <title>Complete sequence of chromosome of Serratia proteamaculans 568.</title>
        <authorList>
            <consortium name="US DOE Joint Genome Institute"/>
            <person name="Copeland A."/>
            <person name="Lucas S."/>
            <person name="Lapidus A."/>
            <person name="Barry K."/>
            <person name="Glavina del Rio T."/>
            <person name="Dalin E."/>
            <person name="Tice H."/>
            <person name="Pitluck S."/>
            <person name="Chain P."/>
            <person name="Malfatti S."/>
            <person name="Shin M."/>
            <person name="Vergez L."/>
            <person name="Schmutz J."/>
            <person name="Larimer F."/>
            <person name="Land M."/>
            <person name="Hauser L."/>
            <person name="Kyrpides N."/>
            <person name="Kim E."/>
            <person name="Taghavi S."/>
            <person name="Newman L."/>
            <person name="Vangronsveld J."/>
            <person name="van der Lelie D."/>
            <person name="Richardson P."/>
        </authorList>
    </citation>
    <scope>NUCLEOTIDE SEQUENCE [LARGE SCALE GENOMIC DNA]</scope>
    <source>
        <strain>568</strain>
    </source>
</reference>
<keyword id="KW-0997">Cell inner membrane</keyword>
<keyword id="KW-1003">Cell membrane</keyword>
<keyword id="KW-0406">Ion transport</keyword>
<keyword id="KW-0472">Membrane</keyword>
<keyword id="KW-0630">Potassium</keyword>
<keyword id="KW-0633">Potassium transport</keyword>
<keyword id="KW-0812">Transmembrane</keyword>
<keyword id="KW-1133">Transmembrane helix</keyword>
<keyword id="KW-0813">Transport</keyword>
<protein>
    <recommendedName>
        <fullName evidence="1">Potassium-transporting ATPase potassium-binding subunit</fullName>
    </recommendedName>
    <alternativeName>
        <fullName evidence="1">ATP phosphohydrolase [potassium-transporting] A chain</fullName>
    </alternativeName>
    <alternativeName>
        <fullName evidence="1">Potassium-binding and translocating subunit A</fullName>
    </alternativeName>
    <alternativeName>
        <fullName evidence="1">Potassium-translocating ATPase A chain</fullName>
    </alternativeName>
</protein>
<comment type="function">
    <text evidence="1">Part of the high-affinity ATP-driven potassium transport (or Kdp) system, which catalyzes the hydrolysis of ATP coupled with the electrogenic transport of potassium into the cytoplasm. This subunit binds the periplasmic potassium ions and delivers the ions to the membrane domain of KdpB through an intramembrane tunnel.</text>
</comment>
<comment type="subunit">
    <text evidence="1">The system is composed of three essential subunits: KdpA, KdpB and KdpC.</text>
</comment>
<comment type="subcellular location">
    <subcellularLocation>
        <location evidence="1">Cell inner membrane</location>
        <topology evidence="1">Multi-pass membrane protein</topology>
    </subcellularLocation>
</comment>
<comment type="similarity">
    <text evidence="1">Belongs to the KdpA family.</text>
</comment>
<gene>
    <name evidence="1" type="primary">kdpA</name>
    <name type="ordered locus">Spro_1248</name>
</gene>
<sequence>MAASAFLLIASFMLVLLLLARPLGSFLARLIEGEPLPALRRVEAAVWRCCGNTTAEMNWWQYALAILWFNLLGLALLFALLMTQGSLPLNPQGFPGLSWDLAFNTAVSFVTNTNWQAYSGESTLSYLSQMAGLAVQNFLSAATGIAVAFALIRAFTRRSSATIGNAWIDVFRITLYVLLPISLLIALFFVSQGTLQNFLPYLHISTLEGAQQTLPMGPVASQEAIKMLGTNGGGFFGVNSAHPFENPTVLTNFVQMLAIFLIPCALCFSFGQVAGENRQGHALIWAMSLIFVVAVVVVMYAELAGNPHLSELGSASNINMEGKESRFGILATSMFSVVTTAASCGAVNAMHDSFTALGGMVPMWLMQIGEVVFGGVGSGLYGMLLFVLLTVFIAGLMIGRTPEYLGKKIDVYDMKMTALAILVTPTLVLLGSALAISTDVGRAGILNPGAHGFSEVLYALSSAANNNGSAFGGLSVNTPFYNLLLAFAMFVGRFGVILPVLAIAGSLCAKKRQPAGNGTLPTYGPLFIGLLVGTVLLVGALTFVPALALGPVAEHLQLWLTK</sequence>
<feature type="chain" id="PRO_1000059212" description="Potassium-transporting ATPase potassium-binding subunit">
    <location>
        <begin position="1"/>
        <end position="562"/>
    </location>
</feature>
<feature type="transmembrane region" description="Helical" evidence="1">
    <location>
        <begin position="6"/>
        <end position="26"/>
    </location>
</feature>
<feature type="transmembrane region" description="Helical" evidence="1">
    <location>
        <begin position="62"/>
        <end position="82"/>
    </location>
</feature>
<feature type="transmembrane region" description="Helical" evidence="1">
    <location>
        <begin position="132"/>
        <end position="152"/>
    </location>
</feature>
<feature type="transmembrane region" description="Helical" evidence="1">
    <location>
        <begin position="170"/>
        <end position="190"/>
    </location>
</feature>
<feature type="transmembrane region" description="Helical" evidence="1">
    <location>
        <begin position="253"/>
        <end position="273"/>
    </location>
</feature>
<feature type="transmembrane region" description="Helical" evidence="1">
    <location>
        <begin position="283"/>
        <end position="303"/>
    </location>
</feature>
<feature type="transmembrane region" description="Helical" evidence="1">
    <location>
        <begin position="327"/>
        <end position="347"/>
    </location>
</feature>
<feature type="transmembrane region" description="Helical" evidence="1">
    <location>
        <begin position="356"/>
        <end position="376"/>
    </location>
</feature>
<feature type="transmembrane region" description="Helical" evidence="1">
    <location>
        <begin position="379"/>
        <end position="399"/>
    </location>
</feature>
<feature type="transmembrane region" description="Helical" evidence="1">
    <location>
        <begin position="416"/>
        <end position="436"/>
    </location>
</feature>
<feature type="transmembrane region" description="Helical" evidence="1">
    <location>
        <begin position="483"/>
        <end position="503"/>
    </location>
</feature>
<feature type="transmembrane region" description="Helical" evidence="1">
    <location>
        <begin position="526"/>
        <end position="546"/>
    </location>
</feature>
<name>KDPA_SERP5</name>
<accession>A8GB62</accession>
<proteinExistence type="inferred from homology"/>
<organism>
    <name type="scientific">Serratia proteamaculans (strain 568)</name>
    <dbReference type="NCBI Taxonomy" id="399741"/>
    <lineage>
        <taxon>Bacteria</taxon>
        <taxon>Pseudomonadati</taxon>
        <taxon>Pseudomonadota</taxon>
        <taxon>Gammaproteobacteria</taxon>
        <taxon>Enterobacterales</taxon>
        <taxon>Yersiniaceae</taxon>
        <taxon>Serratia</taxon>
    </lineage>
</organism>
<dbReference type="EMBL" id="CP000826">
    <property type="protein sequence ID" value="ABV40352.1"/>
    <property type="molecule type" value="Genomic_DNA"/>
</dbReference>
<dbReference type="SMR" id="A8GB62"/>
<dbReference type="STRING" id="399741.Spro_1248"/>
<dbReference type="KEGG" id="spe:Spro_1248"/>
<dbReference type="eggNOG" id="COG2060">
    <property type="taxonomic scope" value="Bacteria"/>
</dbReference>
<dbReference type="HOGENOM" id="CLU_018614_3_0_6"/>
<dbReference type="OrthoDB" id="9763796at2"/>
<dbReference type="GO" id="GO:0005886">
    <property type="term" value="C:plasma membrane"/>
    <property type="evidence" value="ECO:0007669"/>
    <property type="project" value="UniProtKB-SubCell"/>
</dbReference>
<dbReference type="GO" id="GO:0008556">
    <property type="term" value="F:P-type potassium transmembrane transporter activity"/>
    <property type="evidence" value="ECO:0007669"/>
    <property type="project" value="InterPro"/>
</dbReference>
<dbReference type="GO" id="GO:0030955">
    <property type="term" value="F:potassium ion binding"/>
    <property type="evidence" value="ECO:0007669"/>
    <property type="project" value="UniProtKB-UniRule"/>
</dbReference>
<dbReference type="HAMAP" id="MF_00275">
    <property type="entry name" value="KdpA"/>
    <property type="match status" value="1"/>
</dbReference>
<dbReference type="InterPro" id="IPR004623">
    <property type="entry name" value="KdpA"/>
</dbReference>
<dbReference type="NCBIfam" id="TIGR00680">
    <property type="entry name" value="kdpA"/>
    <property type="match status" value="1"/>
</dbReference>
<dbReference type="PANTHER" id="PTHR30607">
    <property type="entry name" value="POTASSIUM-TRANSPORTING ATPASE A CHAIN"/>
    <property type="match status" value="1"/>
</dbReference>
<dbReference type="PANTHER" id="PTHR30607:SF2">
    <property type="entry name" value="POTASSIUM-TRANSPORTING ATPASE POTASSIUM-BINDING SUBUNIT"/>
    <property type="match status" value="1"/>
</dbReference>
<dbReference type="Pfam" id="PF03814">
    <property type="entry name" value="KdpA"/>
    <property type="match status" value="1"/>
</dbReference>
<dbReference type="PIRSF" id="PIRSF001294">
    <property type="entry name" value="K_ATPaseA"/>
    <property type="match status" value="1"/>
</dbReference>
<evidence type="ECO:0000255" key="1">
    <source>
        <dbReference type="HAMAP-Rule" id="MF_00275"/>
    </source>
</evidence>